<evidence type="ECO:0000255" key="1">
    <source>
        <dbReference type="HAMAP-Rule" id="MF_00527"/>
    </source>
</evidence>
<feature type="chain" id="PRO_1000060930" description="Putative 3-methyladenine DNA glycosylase">
    <location>
        <begin position="1"/>
        <end position="201"/>
    </location>
</feature>
<sequence length="201" mass="23342">MKRLNREFYTRDTIEVAKDLLGKIIVVENETKLLGKIVEVEAYGGISDKAAHSYGNRKTERTKIMYEEGGYVYVFQIYGMYNCLNIVSSKKDVPEAVLIRAVEPIENIDDFSKNRYGKDFNELTKYQQKNITNGPGKLCMAMNITKKFNGLDLCKDNIYIVDNKEEFEIVASKRIGIDYAEEAKDYLWRFYIKDSKYVSKK</sequence>
<gene>
    <name type="ordered locus">NT01CX_1732</name>
</gene>
<proteinExistence type="inferred from homology"/>
<organism>
    <name type="scientific">Clostridium novyi (strain NT)</name>
    <dbReference type="NCBI Taxonomy" id="386415"/>
    <lineage>
        <taxon>Bacteria</taxon>
        <taxon>Bacillati</taxon>
        <taxon>Bacillota</taxon>
        <taxon>Clostridia</taxon>
        <taxon>Eubacteriales</taxon>
        <taxon>Clostridiaceae</taxon>
        <taxon>Clostridium</taxon>
    </lineage>
</organism>
<keyword id="KW-0227">DNA damage</keyword>
<keyword id="KW-0234">DNA repair</keyword>
<keyword id="KW-0378">Hydrolase</keyword>
<keyword id="KW-1185">Reference proteome</keyword>
<name>3MGH_CLONN</name>
<comment type="similarity">
    <text evidence="1">Belongs to the DNA glycosylase MPG family.</text>
</comment>
<dbReference type="EC" id="3.2.2.-" evidence="1"/>
<dbReference type="EMBL" id="CP000382">
    <property type="protein sequence ID" value="ABK60840.1"/>
    <property type="molecule type" value="Genomic_DNA"/>
</dbReference>
<dbReference type="RefSeq" id="WP_011721816.1">
    <property type="nucleotide sequence ID" value="NC_008593.1"/>
</dbReference>
<dbReference type="SMR" id="A0PZK9"/>
<dbReference type="STRING" id="386415.NT01CX_1732"/>
<dbReference type="KEGG" id="cno:NT01CX_1732"/>
<dbReference type="PATRIC" id="fig|386415.7.peg.840"/>
<dbReference type="eggNOG" id="COG2094">
    <property type="taxonomic scope" value="Bacteria"/>
</dbReference>
<dbReference type="HOGENOM" id="CLU_060471_0_2_9"/>
<dbReference type="Proteomes" id="UP000008220">
    <property type="component" value="Chromosome"/>
</dbReference>
<dbReference type="GO" id="GO:0003905">
    <property type="term" value="F:alkylbase DNA N-glycosylase activity"/>
    <property type="evidence" value="ECO:0007669"/>
    <property type="project" value="InterPro"/>
</dbReference>
<dbReference type="GO" id="GO:0003677">
    <property type="term" value="F:DNA binding"/>
    <property type="evidence" value="ECO:0007669"/>
    <property type="project" value="InterPro"/>
</dbReference>
<dbReference type="GO" id="GO:0006284">
    <property type="term" value="P:base-excision repair"/>
    <property type="evidence" value="ECO:0007669"/>
    <property type="project" value="InterPro"/>
</dbReference>
<dbReference type="CDD" id="cd00540">
    <property type="entry name" value="AAG"/>
    <property type="match status" value="1"/>
</dbReference>
<dbReference type="FunFam" id="3.10.300.10:FF:000001">
    <property type="entry name" value="Putative 3-methyladenine DNA glycosylase"/>
    <property type="match status" value="1"/>
</dbReference>
<dbReference type="Gene3D" id="3.10.300.10">
    <property type="entry name" value="Methylpurine-DNA glycosylase (MPG)"/>
    <property type="match status" value="1"/>
</dbReference>
<dbReference type="HAMAP" id="MF_00527">
    <property type="entry name" value="3MGH"/>
    <property type="match status" value="1"/>
</dbReference>
<dbReference type="InterPro" id="IPR011034">
    <property type="entry name" value="Formyl_transferase-like_C_sf"/>
</dbReference>
<dbReference type="InterPro" id="IPR003180">
    <property type="entry name" value="MPG"/>
</dbReference>
<dbReference type="InterPro" id="IPR036995">
    <property type="entry name" value="MPG_sf"/>
</dbReference>
<dbReference type="NCBIfam" id="TIGR00567">
    <property type="entry name" value="3mg"/>
    <property type="match status" value="1"/>
</dbReference>
<dbReference type="NCBIfam" id="NF002001">
    <property type="entry name" value="PRK00802.1-1"/>
    <property type="match status" value="1"/>
</dbReference>
<dbReference type="PANTHER" id="PTHR10429">
    <property type="entry name" value="DNA-3-METHYLADENINE GLYCOSYLASE"/>
    <property type="match status" value="1"/>
</dbReference>
<dbReference type="PANTHER" id="PTHR10429:SF0">
    <property type="entry name" value="DNA-3-METHYLADENINE GLYCOSYLASE"/>
    <property type="match status" value="1"/>
</dbReference>
<dbReference type="Pfam" id="PF02245">
    <property type="entry name" value="Pur_DNA_glyco"/>
    <property type="match status" value="1"/>
</dbReference>
<dbReference type="SUPFAM" id="SSF50486">
    <property type="entry name" value="FMT C-terminal domain-like"/>
    <property type="match status" value="1"/>
</dbReference>
<accession>A0PZK9</accession>
<reference key="1">
    <citation type="journal article" date="2006" name="Nat. Biotechnol.">
        <title>The genome and transcriptomes of the anti-tumor agent Clostridium novyi-NT.</title>
        <authorList>
            <person name="Bettegowda C."/>
            <person name="Huang X."/>
            <person name="Lin J."/>
            <person name="Cheong I."/>
            <person name="Kohli M."/>
            <person name="Szabo S.A."/>
            <person name="Zhang X."/>
            <person name="Diaz L.A. Jr."/>
            <person name="Velculescu V.E."/>
            <person name="Parmigiani G."/>
            <person name="Kinzler K.W."/>
            <person name="Vogelstein B."/>
            <person name="Zhou S."/>
        </authorList>
    </citation>
    <scope>NUCLEOTIDE SEQUENCE [LARGE SCALE GENOMIC DNA]</scope>
    <source>
        <strain>NT</strain>
    </source>
</reference>
<protein>
    <recommendedName>
        <fullName evidence="1">Putative 3-methyladenine DNA glycosylase</fullName>
        <ecNumber evidence="1">3.2.2.-</ecNumber>
    </recommendedName>
</protein>